<comment type="function">
    <text>Crystallins are the dominant structural components of the vertebrate eye lens.</text>
</comment>
<comment type="domain">
    <text>Has a two-domain beta-structure, folded into four very similar Greek key motifs.</text>
</comment>
<comment type="similarity">
    <text evidence="3">Belongs to the beta/gamma-crystallin family.</text>
</comment>
<keyword id="KW-0903">Direct protein sequencing</keyword>
<keyword id="KW-0273">Eye lens protein</keyword>
<keyword id="KW-0488">Methylation</keyword>
<keyword id="KW-1185">Reference proteome</keyword>
<keyword id="KW-0677">Repeat</keyword>
<sequence length="174" mass="20874">MGKITFYEDRGFQGRCYQCSSDCPNLQPYFSRCNSIRVDSGCWMLYERPNYQGHQYFLRRGDYPDYQQWMGFNDSIRSCCLISDTSSHRLRLYEREDQKGLIAELSEDCPCIQDRFRLSEVRSLHVLEGCWVLYEMPNYRGRQYLLRPQEYRRYQDWGAVDAKAGSLRRVVDLY</sequence>
<proteinExistence type="evidence at protein level"/>
<evidence type="ECO:0000250" key="1"/>
<evidence type="ECO:0000255" key="2">
    <source>
        <dbReference type="PROSITE-ProRule" id="PRU00028"/>
    </source>
</evidence>
<evidence type="ECO:0000305" key="3"/>
<gene>
    <name type="primary">CRYGC</name>
</gene>
<protein>
    <recommendedName>
        <fullName>Gamma-crystallin C</fullName>
    </recommendedName>
    <alternativeName>
        <fullName>Gamma-C-crystallin</fullName>
    </alternativeName>
    <alternativeName>
        <fullName>Gamma-crystallin IIIA</fullName>
    </alternativeName>
</protein>
<name>CRGC_BOVIN</name>
<accession>Q28088</accession>
<accession>A3RLE3</accession>
<reference key="1">
    <citation type="journal article" date="1994" name="Exp. Eye Res.">
        <title>Expression of recombinant bovine gamma B-, gamma C- and gamma D-crystallins and correlation with native proteins.</title>
        <authorList>
            <person name="Hay R.E."/>
            <person name="Andley U.P."/>
            <person name="Petrash J.M."/>
        </authorList>
    </citation>
    <scope>NUCLEOTIDE SEQUENCE [MRNA]</scope>
    <scope>PARTIAL PROTEIN SEQUENCE</scope>
    <source>
        <tissue>Lens</tissue>
    </source>
</reference>
<reference key="2">
    <citation type="submission" date="2007-02" db="EMBL/GenBank/DDBJ databases">
        <title>Cow gammaC-crystallin.</title>
        <authorList>
            <person name="Wistow G."/>
        </authorList>
    </citation>
    <scope>NUCLEOTIDE SEQUENCE [MRNA]</scope>
    <source>
        <tissue>Lens</tissue>
    </source>
</reference>
<organism>
    <name type="scientific">Bos taurus</name>
    <name type="common">Bovine</name>
    <dbReference type="NCBI Taxonomy" id="9913"/>
    <lineage>
        <taxon>Eukaryota</taxon>
        <taxon>Metazoa</taxon>
        <taxon>Chordata</taxon>
        <taxon>Craniata</taxon>
        <taxon>Vertebrata</taxon>
        <taxon>Euteleostomi</taxon>
        <taxon>Mammalia</taxon>
        <taxon>Eutheria</taxon>
        <taxon>Laurasiatheria</taxon>
        <taxon>Artiodactyla</taxon>
        <taxon>Ruminantia</taxon>
        <taxon>Pecora</taxon>
        <taxon>Bovidae</taxon>
        <taxon>Bovinae</taxon>
        <taxon>Bos</taxon>
    </lineage>
</organism>
<feature type="chain" id="PRO_0000057583" description="Gamma-crystallin C">
    <location>
        <begin position="1"/>
        <end position="174"/>
    </location>
</feature>
<feature type="domain" description="Beta/gamma crystallin 'Greek key' 1" evidence="2">
    <location>
        <begin position="2"/>
        <end position="40"/>
    </location>
</feature>
<feature type="domain" description="Beta/gamma crystallin 'Greek key' 2" evidence="2">
    <location>
        <begin position="41"/>
        <end position="83"/>
    </location>
</feature>
<feature type="domain" description="Beta/gamma crystallin 'Greek key' 3" evidence="2">
    <location>
        <begin position="88"/>
        <end position="128"/>
    </location>
</feature>
<feature type="domain" description="Beta/gamma crystallin 'Greek key' 4" evidence="2">
    <location>
        <begin position="129"/>
        <end position="171"/>
    </location>
</feature>
<feature type="region of interest" description="Connecting peptide">
    <location>
        <begin position="84"/>
        <end position="87"/>
    </location>
</feature>
<feature type="modified residue" description="S-methylcysteine" evidence="1">
    <location>
        <position position="23"/>
    </location>
</feature>
<dbReference type="EMBL" id="L27069">
    <property type="protein sequence ID" value="AAB59263.1"/>
    <property type="molecule type" value="mRNA"/>
</dbReference>
<dbReference type="EMBL" id="EF426310">
    <property type="protein sequence ID" value="ABO14695.1"/>
    <property type="molecule type" value="mRNA"/>
</dbReference>
<dbReference type="PIR" id="I45881">
    <property type="entry name" value="I45881"/>
</dbReference>
<dbReference type="RefSeq" id="NP_001013613.1">
    <property type="nucleotide sequence ID" value="NM_001013595.1"/>
</dbReference>
<dbReference type="SMR" id="Q28088"/>
<dbReference type="BioGRID" id="159038">
    <property type="interactions" value="3"/>
</dbReference>
<dbReference type="FunCoup" id="Q28088">
    <property type="interactions" value="8"/>
</dbReference>
<dbReference type="STRING" id="9913.ENSBTAP00000019664"/>
<dbReference type="PaxDb" id="9913-ENSBTAP00000019664"/>
<dbReference type="Ensembl" id="ENSBTAT00000019664.3">
    <property type="protein sequence ID" value="ENSBTAP00000019664.2"/>
    <property type="gene ID" value="ENSBTAG00000014783.5"/>
</dbReference>
<dbReference type="GeneID" id="281722"/>
<dbReference type="KEGG" id="bta:281722"/>
<dbReference type="CTD" id="1420"/>
<dbReference type="VEuPathDB" id="HostDB:ENSBTAG00000014783"/>
<dbReference type="VGNC" id="VGNC:27741">
    <property type="gene designation" value="CRYGC"/>
</dbReference>
<dbReference type="eggNOG" id="ENOG502RXJY">
    <property type="taxonomic scope" value="Eukaryota"/>
</dbReference>
<dbReference type="GeneTree" id="ENSGT00940000159232"/>
<dbReference type="HOGENOM" id="CLU_081883_1_1_1"/>
<dbReference type="InParanoid" id="Q28088"/>
<dbReference type="OMA" id="DDCSCIQ"/>
<dbReference type="OrthoDB" id="8407241at2759"/>
<dbReference type="Proteomes" id="UP000009136">
    <property type="component" value="Chromosome 2"/>
</dbReference>
<dbReference type="Bgee" id="ENSBTAG00000014783">
    <property type="expression patterns" value="Expressed in cumulus cell and 1 other cell type or tissue"/>
</dbReference>
<dbReference type="GO" id="GO:0005737">
    <property type="term" value="C:cytoplasm"/>
    <property type="evidence" value="ECO:0007669"/>
    <property type="project" value="Ensembl"/>
</dbReference>
<dbReference type="GO" id="GO:0005634">
    <property type="term" value="C:nucleus"/>
    <property type="evidence" value="ECO:0007669"/>
    <property type="project" value="Ensembl"/>
</dbReference>
<dbReference type="GO" id="GO:0005212">
    <property type="term" value="F:structural constituent of eye lens"/>
    <property type="evidence" value="ECO:0000318"/>
    <property type="project" value="GO_Central"/>
</dbReference>
<dbReference type="GO" id="GO:0002088">
    <property type="term" value="P:lens development in camera-type eye"/>
    <property type="evidence" value="ECO:0000318"/>
    <property type="project" value="GO_Central"/>
</dbReference>
<dbReference type="GO" id="GO:0007601">
    <property type="term" value="P:visual perception"/>
    <property type="evidence" value="ECO:0000318"/>
    <property type="project" value="GO_Central"/>
</dbReference>
<dbReference type="FunFam" id="2.60.20.10:FF:000001">
    <property type="entry name" value="Crystallin gamma S"/>
    <property type="match status" value="1"/>
</dbReference>
<dbReference type="FunFam" id="2.60.20.10:FF:000003">
    <property type="entry name" value="Crystallin gamma S"/>
    <property type="match status" value="1"/>
</dbReference>
<dbReference type="Gene3D" id="2.60.20.10">
    <property type="entry name" value="Crystallins"/>
    <property type="match status" value="2"/>
</dbReference>
<dbReference type="InterPro" id="IPR050252">
    <property type="entry name" value="Beta/Gamma-Crystallin"/>
</dbReference>
<dbReference type="InterPro" id="IPR001064">
    <property type="entry name" value="Beta/gamma_crystallin"/>
</dbReference>
<dbReference type="InterPro" id="IPR011024">
    <property type="entry name" value="G_crystallin-like"/>
</dbReference>
<dbReference type="PANTHER" id="PTHR11818">
    <property type="entry name" value="BETA/GAMMA CRYSTALLIN"/>
    <property type="match status" value="1"/>
</dbReference>
<dbReference type="PANTHER" id="PTHR11818:SF32">
    <property type="entry name" value="GAMMA-CRYSTALLIN C"/>
    <property type="match status" value="1"/>
</dbReference>
<dbReference type="Pfam" id="PF00030">
    <property type="entry name" value="Crystall"/>
    <property type="match status" value="2"/>
</dbReference>
<dbReference type="PRINTS" id="PR01367">
    <property type="entry name" value="BGCRYSTALLIN"/>
</dbReference>
<dbReference type="SMART" id="SM00247">
    <property type="entry name" value="XTALbg"/>
    <property type="match status" value="2"/>
</dbReference>
<dbReference type="SUPFAM" id="SSF49695">
    <property type="entry name" value="gamma-Crystallin-like"/>
    <property type="match status" value="1"/>
</dbReference>
<dbReference type="PROSITE" id="PS50915">
    <property type="entry name" value="CRYSTALLIN_BETA_GAMMA"/>
    <property type="match status" value="4"/>
</dbReference>